<organism>
    <name type="scientific">Burkholderia multivorans (strain ATCC 17616 / 249)</name>
    <dbReference type="NCBI Taxonomy" id="395019"/>
    <lineage>
        <taxon>Bacteria</taxon>
        <taxon>Pseudomonadati</taxon>
        <taxon>Pseudomonadota</taxon>
        <taxon>Betaproteobacteria</taxon>
        <taxon>Burkholderiales</taxon>
        <taxon>Burkholderiaceae</taxon>
        <taxon>Burkholderia</taxon>
        <taxon>Burkholderia cepacia complex</taxon>
    </lineage>
</organism>
<reference key="1">
    <citation type="submission" date="2007-10" db="EMBL/GenBank/DDBJ databases">
        <title>Complete sequence of chromosome 1 of Burkholderia multivorans ATCC 17616.</title>
        <authorList>
            <person name="Copeland A."/>
            <person name="Lucas S."/>
            <person name="Lapidus A."/>
            <person name="Barry K."/>
            <person name="Glavina del Rio T."/>
            <person name="Dalin E."/>
            <person name="Tice H."/>
            <person name="Pitluck S."/>
            <person name="Chain P."/>
            <person name="Malfatti S."/>
            <person name="Shin M."/>
            <person name="Vergez L."/>
            <person name="Schmutz J."/>
            <person name="Larimer F."/>
            <person name="Land M."/>
            <person name="Hauser L."/>
            <person name="Kyrpides N."/>
            <person name="Kim E."/>
            <person name="Tiedje J."/>
            <person name="Richardson P."/>
        </authorList>
    </citation>
    <scope>NUCLEOTIDE SEQUENCE [LARGE SCALE GENOMIC DNA]</scope>
    <source>
        <strain>ATCC 17616 / 249</strain>
    </source>
</reference>
<reference key="2">
    <citation type="submission" date="2007-04" db="EMBL/GenBank/DDBJ databases">
        <title>Complete genome sequence of Burkholderia multivorans ATCC 17616.</title>
        <authorList>
            <person name="Ohtsubo Y."/>
            <person name="Yamashita A."/>
            <person name="Kurokawa K."/>
            <person name="Takami H."/>
            <person name="Yuhara S."/>
            <person name="Nishiyama E."/>
            <person name="Endo R."/>
            <person name="Miyazaki R."/>
            <person name="Ono A."/>
            <person name="Yano K."/>
            <person name="Ito M."/>
            <person name="Sota M."/>
            <person name="Yuji N."/>
            <person name="Hattori M."/>
            <person name="Tsuda M."/>
        </authorList>
    </citation>
    <scope>NUCLEOTIDE SEQUENCE [LARGE SCALE GENOMIC DNA]</scope>
    <source>
        <strain>ATCC 17616 / 249</strain>
    </source>
</reference>
<protein>
    <recommendedName>
        <fullName evidence="1">Proline--tRNA ligase</fullName>
        <ecNumber evidence="1">6.1.1.15</ecNumber>
    </recommendedName>
    <alternativeName>
        <fullName evidence="1">Prolyl-tRNA synthetase</fullName>
        <shortName evidence="1">ProRS</shortName>
    </alternativeName>
</protein>
<name>SYP_BURM1</name>
<gene>
    <name evidence="1" type="primary">proS</name>
    <name type="ordered locus">Bmul_2796</name>
    <name type="ordered locus">BMULJ_00441</name>
</gene>
<comment type="function">
    <text evidence="1">Catalyzes the attachment of proline to tRNA(Pro) in a two-step reaction: proline is first activated by ATP to form Pro-AMP and then transferred to the acceptor end of tRNA(Pro). As ProRS can inadvertently accommodate and process non-cognate amino acids such as alanine and cysteine, to avoid such errors it has two additional distinct editing activities against alanine. One activity is designated as 'pretransfer' editing and involves the tRNA(Pro)-independent hydrolysis of activated Ala-AMP. The other activity is designated 'posttransfer' editing and involves deacylation of mischarged Ala-tRNA(Pro). The misacylated Cys-tRNA(Pro) is not edited by ProRS.</text>
</comment>
<comment type="catalytic activity">
    <reaction evidence="1">
        <text>tRNA(Pro) + L-proline + ATP = L-prolyl-tRNA(Pro) + AMP + diphosphate</text>
        <dbReference type="Rhea" id="RHEA:14305"/>
        <dbReference type="Rhea" id="RHEA-COMP:9700"/>
        <dbReference type="Rhea" id="RHEA-COMP:9702"/>
        <dbReference type="ChEBI" id="CHEBI:30616"/>
        <dbReference type="ChEBI" id="CHEBI:33019"/>
        <dbReference type="ChEBI" id="CHEBI:60039"/>
        <dbReference type="ChEBI" id="CHEBI:78442"/>
        <dbReference type="ChEBI" id="CHEBI:78532"/>
        <dbReference type="ChEBI" id="CHEBI:456215"/>
        <dbReference type="EC" id="6.1.1.15"/>
    </reaction>
</comment>
<comment type="subunit">
    <text evidence="1">Homodimer.</text>
</comment>
<comment type="subcellular location">
    <subcellularLocation>
        <location evidence="1">Cytoplasm</location>
    </subcellularLocation>
</comment>
<comment type="domain">
    <text evidence="1">Consists of three domains: the N-terminal catalytic domain, the editing domain and the C-terminal anticodon-binding domain.</text>
</comment>
<comment type="similarity">
    <text evidence="1">Belongs to the class-II aminoacyl-tRNA synthetase family. ProS type 1 subfamily.</text>
</comment>
<feature type="chain" id="PRO_1000199360" description="Proline--tRNA ligase">
    <location>
        <begin position="1"/>
        <end position="578"/>
    </location>
</feature>
<sequence length="578" mass="63822">MKASRFFIGTLKEAPADAEIVSHKLMVRAGMIRRVAGGIYNYLPIGLRSIRKVEAIVREEMNRAGAVELLMPAVQPAELWQESGRWEQYGPELLRFKDRKDNDFVIGPTHEEVVTDIARNQIKSYRQMPVNFYQIQTKFRDEIRPRFGVMRGREFIMKDAYSFDKDAEGLRESYRKMYDAYVRIFTRLGLEFRAVAADSGSIGGNFSHEFHVIADTGEDAIAYCPSSEFAANVEAAEALPLIAERAAPAEALTKVATPGKAKCEAVAELLNIPLERTIKSIVLATDNEGAEPTIWLVMLRGDHDLNEIKVSKLPGLKNHRFATEQEIVEWFGTPPGYLGPIGTKKPVKVIADRTVANMSDFVVGANEVDYHIAGVNWGRDLPEPEVADVRNVKKGDPSPDGKGAIDICRGIEVGHVFQLGTKYSEAMGATFLDESGKPQPMLMGCYGIGVTRILGAAIEQNFDDKGIIWPESIAPFEVVLCPMGYDRSDAVREAADKLYAELTAAGIDVILDDRGERPGVMFADWELIGVPHRLVIGERGLKDGKIEYQGRRDTEATLLPAGEAAATVAEKVRAALAH</sequence>
<dbReference type="EC" id="6.1.1.15" evidence="1"/>
<dbReference type="EMBL" id="CP000868">
    <property type="protein sequence ID" value="ABX16480.1"/>
    <property type="molecule type" value="Genomic_DNA"/>
</dbReference>
<dbReference type="EMBL" id="AP009385">
    <property type="protein sequence ID" value="BAG42408.1"/>
    <property type="molecule type" value="Genomic_DNA"/>
</dbReference>
<dbReference type="RefSeq" id="WP_006400413.1">
    <property type="nucleotide sequence ID" value="NC_010804.1"/>
</dbReference>
<dbReference type="SMR" id="A9AI56"/>
<dbReference type="STRING" id="395019.BMULJ_00441"/>
<dbReference type="KEGG" id="bmj:BMULJ_00441"/>
<dbReference type="KEGG" id="bmu:Bmul_2796"/>
<dbReference type="eggNOG" id="COG0442">
    <property type="taxonomic scope" value="Bacteria"/>
</dbReference>
<dbReference type="HOGENOM" id="CLU_016739_0_0_4"/>
<dbReference type="Proteomes" id="UP000008815">
    <property type="component" value="Chromosome 1"/>
</dbReference>
<dbReference type="GO" id="GO:0005829">
    <property type="term" value="C:cytosol"/>
    <property type="evidence" value="ECO:0007669"/>
    <property type="project" value="TreeGrafter"/>
</dbReference>
<dbReference type="GO" id="GO:0002161">
    <property type="term" value="F:aminoacyl-tRNA deacylase activity"/>
    <property type="evidence" value="ECO:0007669"/>
    <property type="project" value="InterPro"/>
</dbReference>
<dbReference type="GO" id="GO:0005524">
    <property type="term" value="F:ATP binding"/>
    <property type="evidence" value="ECO:0007669"/>
    <property type="project" value="UniProtKB-UniRule"/>
</dbReference>
<dbReference type="GO" id="GO:0004827">
    <property type="term" value="F:proline-tRNA ligase activity"/>
    <property type="evidence" value="ECO:0007669"/>
    <property type="project" value="UniProtKB-UniRule"/>
</dbReference>
<dbReference type="GO" id="GO:0006433">
    <property type="term" value="P:prolyl-tRNA aminoacylation"/>
    <property type="evidence" value="ECO:0007669"/>
    <property type="project" value="UniProtKB-UniRule"/>
</dbReference>
<dbReference type="CDD" id="cd04334">
    <property type="entry name" value="ProRS-INS"/>
    <property type="match status" value="1"/>
</dbReference>
<dbReference type="CDD" id="cd00861">
    <property type="entry name" value="ProRS_anticodon_short"/>
    <property type="match status" value="1"/>
</dbReference>
<dbReference type="CDD" id="cd00779">
    <property type="entry name" value="ProRS_core_prok"/>
    <property type="match status" value="1"/>
</dbReference>
<dbReference type="FunFam" id="3.30.930.10:FF:000043">
    <property type="entry name" value="Proline--tRNA ligase"/>
    <property type="match status" value="1"/>
</dbReference>
<dbReference type="FunFam" id="3.30.930.10:FF:000097">
    <property type="entry name" value="Proline--tRNA ligase"/>
    <property type="match status" value="1"/>
</dbReference>
<dbReference type="Gene3D" id="3.40.50.800">
    <property type="entry name" value="Anticodon-binding domain"/>
    <property type="match status" value="1"/>
</dbReference>
<dbReference type="Gene3D" id="3.30.930.10">
    <property type="entry name" value="Bira Bifunctional Protein, Domain 2"/>
    <property type="match status" value="2"/>
</dbReference>
<dbReference type="Gene3D" id="3.90.960.10">
    <property type="entry name" value="YbaK/aminoacyl-tRNA synthetase-associated domain"/>
    <property type="match status" value="1"/>
</dbReference>
<dbReference type="HAMAP" id="MF_01569">
    <property type="entry name" value="Pro_tRNA_synth_type1"/>
    <property type="match status" value="1"/>
</dbReference>
<dbReference type="InterPro" id="IPR002314">
    <property type="entry name" value="aa-tRNA-synt_IIb"/>
</dbReference>
<dbReference type="InterPro" id="IPR006195">
    <property type="entry name" value="aa-tRNA-synth_II"/>
</dbReference>
<dbReference type="InterPro" id="IPR045864">
    <property type="entry name" value="aa-tRNA-synth_II/BPL/LPL"/>
</dbReference>
<dbReference type="InterPro" id="IPR004154">
    <property type="entry name" value="Anticodon-bd"/>
</dbReference>
<dbReference type="InterPro" id="IPR036621">
    <property type="entry name" value="Anticodon-bd_dom_sf"/>
</dbReference>
<dbReference type="InterPro" id="IPR002316">
    <property type="entry name" value="Pro-tRNA-ligase_IIa"/>
</dbReference>
<dbReference type="InterPro" id="IPR004500">
    <property type="entry name" value="Pro-tRNA-synth_IIa_bac-type"/>
</dbReference>
<dbReference type="InterPro" id="IPR023717">
    <property type="entry name" value="Pro-tRNA-Synthase_IIa_type1"/>
</dbReference>
<dbReference type="InterPro" id="IPR050062">
    <property type="entry name" value="Pro-tRNA_synthetase"/>
</dbReference>
<dbReference type="InterPro" id="IPR044140">
    <property type="entry name" value="ProRS_anticodon_short"/>
</dbReference>
<dbReference type="InterPro" id="IPR033730">
    <property type="entry name" value="ProRS_core_prok"/>
</dbReference>
<dbReference type="InterPro" id="IPR036754">
    <property type="entry name" value="YbaK/aa-tRNA-synt-asso_dom_sf"/>
</dbReference>
<dbReference type="InterPro" id="IPR007214">
    <property type="entry name" value="YbaK/aa-tRNA-synth-assoc-dom"/>
</dbReference>
<dbReference type="NCBIfam" id="NF006625">
    <property type="entry name" value="PRK09194.1"/>
    <property type="match status" value="1"/>
</dbReference>
<dbReference type="NCBIfam" id="TIGR00409">
    <property type="entry name" value="proS_fam_II"/>
    <property type="match status" value="1"/>
</dbReference>
<dbReference type="PANTHER" id="PTHR42753">
    <property type="entry name" value="MITOCHONDRIAL RIBOSOME PROTEIN L39/PROLYL-TRNA LIGASE FAMILY MEMBER"/>
    <property type="match status" value="1"/>
</dbReference>
<dbReference type="PANTHER" id="PTHR42753:SF2">
    <property type="entry name" value="PROLINE--TRNA LIGASE"/>
    <property type="match status" value="1"/>
</dbReference>
<dbReference type="Pfam" id="PF03129">
    <property type="entry name" value="HGTP_anticodon"/>
    <property type="match status" value="1"/>
</dbReference>
<dbReference type="Pfam" id="PF00587">
    <property type="entry name" value="tRNA-synt_2b"/>
    <property type="match status" value="1"/>
</dbReference>
<dbReference type="Pfam" id="PF04073">
    <property type="entry name" value="tRNA_edit"/>
    <property type="match status" value="1"/>
</dbReference>
<dbReference type="PIRSF" id="PIRSF001535">
    <property type="entry name" value="ProRS_1"/>
    <property type="match status" value="1"/>
</dbReference>
<dbReference type="PRINTS" id="PR01046">
    <property type="entry name" value="TRNASYNTHPRO"/>
</dbReference>
<dbReference type="SUPFAM" id="SSF52954">
    <property type="entry name" value="Class II aaRS ABD-related"/>
    <property type="match status" value="1"/>
</dbReference>
<dbReference type="SUPFAM" id="SSF55681">
    <property type="entry name" value="Class II aaRS and biotin synthetases"/>
    <property type="match status" value="1"/>
</dbReference>
<dbReference type="SUPFAM" id="SSF55826">
    <property type="entry name" value="YbaK/ProRS associated domain"/>
    <property type="match status" value="1"/>
</dbReference>
<dbReference type="PROSITE" id="PS50862">
    <property type="entry name" value="AA_TRNA_LIGASE_II"/>
    <property type="match status" value="1"/>
</dbReference>
<proteinExistence type="inferred from homology"/>
<keyword id="KW-0030">Aminoacyl-tRNA synthetase</keyword>
<keyword id="KW-0067">ATP-binding</keyword>
<keyword id="KW-0963">Cytoplasm</keyword>
<keyword id="KW-0436">Ligase</keyword>
<keyword id="KW-0547">Nucleotide-binding</keyword>
<keyword id="KW-0648">Protein biosynthesis</keyword>
<keyword id="KW-1185">Reference proteome</keyword>
<accession>A9AI56</accession>
<evidence type="ECO:0000255" key="1">
    <source>
        <dbReference type="HAMAP-Rule" id="MF_01569"/>
    </source>
</evidence>